<evidence type="ECO:0000255" key="1">
    <source>
        <dbReference type="HAMAP-Rule" id="MF_00176"/>
    </source>
</evidence>
<protein>
    <recommendedName>
        <fullName evidence="1">Serine--tRNA ligase</fullName>
        <ecNumber evidence="1">6.1.1.11</ecNumber>
    </recommendedName>
    <alternativeName>
        <fullName evidence="1">Seryl-tRNA synthetase</fullName>
        <shortName evidence="1">SerRS</shortName>
    </alternativeName>
    <alternativeName>
        <fullName evidence="1">Seryl-tRNA(Ser/Sec) synthetase</fullName>
    </alternativeName>
</protein>
<reference key="1">
    <citation type="journal article" date="2008" name="J. Bacteriol.">
        <title>Insights into plant cell wall degradation from the genome sequence of the soil bacterium Cellvibrio japonicus.</title>
        <authorList>
            <person name="DeBoy R.T."/>
            <person name="Mongodin E.F."/>
            <person name="Fouts D.E."/>
            <person name="Tailford L.E."/>
            <person name="Khouri H."/>
            <person name="Emerson J.B."/>
            <person name="Mohamoud Y."/>
            <person name="Watkins K."/>
            <person name="Henrissat B."/>
            <person name="Gilbert H.J."/>
            <person name="Nelson K.E."/>
        </authorList>
    </citation>
    <scope>NUCLEOTIDE SEQUENCE [LARGE SCALE GENOMIC DNA]</scope>
    <source>
        <strain>Ueda107</strain>
    </source>
</reference>
<organism>
    <name type="scientific">Cellvibrio japonicus (strain Ueda107)</name>
    <name type="common">Pseudomonas fluorescens subsp. cellulosa</name>
    <dbReference type="NCBI Taxonomy" id="498211"/>
    <lineage>
        <taxon>Bacteria</taxon>
        <taxon>Pseudomonadati</taxon>
        <taxon>Pseudomonadota</taxon>
        <taxon>Gammaproteobacteria</taxon>
        <taxon>Cellvibrionales</taxon>
        <taxon>Cellvibrionaceae</taxon>
        <taxon>Cellvibrio</taxon>
    </lineage>
</organism>
<feature type="chain" id="PRO_1000098044" description="Serine--tRNA ligase">
    <location>
        <begin position="1"/>
        <end position="428"/>
    </location>
</feature>
<feature type="binding site" evidence="1">
    <location>
        <begin position="231"/>
        <end position="233"/>
    </location>
    <ligand>
        <name>L-serine</name>
        <dbReference type="ChEBI" id="CHEBI:33384"/>
    </ligand>
</feature>
<feature type="binding site" evidence="1">
    <location>
        <begin position="262"/>
        <end position="264"/>
    </location>
    <ligand>
        <name>ATP</name>
        <dbReference type="ChEBI" id="CHEBI:30616"/>
    </ligand>
</feature>
<feature type="binding site" evidence="1">
    <location>
        <position position="285"/>
    </location>
    <ligand>
        <name>L-serine</name>
        <dbReference type="ChEBI" id="CHEBI:33384"/>
    </ligand>
</feature>
<feature type="binding site" evidence="1">
    <location>
        <begin position="349"/>
        <end position="352"/>
    </location>
    <ligand>
        <name>ATP</name>
        <dbReference type="ChEBI" id="CHEBI:30616"/>
    </ligand>
</feature>
<feature type="binding site" evidence="1">
    <location>
        <position position="385"/>
    </location>
    <ligand>
        <name>L-serine</name>
        <dbReference type="ChEBI" id="CHEBI:33384"/>
    </ligand>
</feature>
<keyword id="KW-0030">Aminoacyl-tRNA synthetase</keyword>
<keyword id="KW-0067">ATP-binding</keyword>
<keyword id="KW-0963">Cytoplasm</keyword>
<keyword id="KW-0436">Ligase</keyword>
<keyword id="KW-0547">Nucleotide-binding</keyword>
<keyword id="KW-0648">Protein biosynthesis</keyword>
<keyword id="KW-1185">Reference proteome</keyword>
<dbReference type="EC" id="6.1.1.11" evidence="1"/>
<dbReference type="EMBL" id="CP000934">
    <property type="protein sequence ID" value="ACE83443.1"/>
    <property type="molecule type" value="Genomic_DNA"/>
</dbReference>
<dbReference type="RefSeq" id="WP_012488148.1">
    <property type="nucleotide sequence ID" value="NC_010995.1"/>
</dbReference>
<dbReference type="SMR" id="B3PL38"/>
<dbReference type="STRING" id="498211.CJA_2552"/>
<dbReference type="KEGG" id="cja:CJA_2552"/>
<dbReference type="eggNOG" id="COG0172">
    <property type="taxonomic scope" value="Bacteria"/>
</dbReference>
<dbReference type="HOGENOM" id="CLU_023797_1_1_6"/>
<dbReference type="OrthoDB" id="9804647at2"/>
<dbReference type="UniPathway" id="UPA00906">
    <property type="reaction ID" value="UER00895"/>
</dbReference>
<dbReference type="Proteomes" id="UP000001036">
    <property type="component" value="Chromosome"/>
</dbReference>
<dbReference type="GO" id="GO:0005737">
    <property type="term" value="C:cytoplasm"/>
    <property type="evidence" value="ECO:0007669"/>
    <property type="project" value="UniProtKB-SubCell"/>
</dbReference>
<dbReference type="GO" id="GO:0005524">
    <property type="term" value="F:ATP binding"/>
    <property type="evidence" value="ECO:0007669"/>
    <property type="project" value="UniProtKB-UniRule"/>
</dbReference>
<dbReference type="GO" id="GO:0004828">
    <property type="term" value="F:serine-tRNA ligase activity"/>
    <property type="evidence" value="ECO:0007669"/>
    <property type="project" value="UniProtKB-UniRule"/>
</dbReference>
<dbReference type="GO" id="GO:0016260">
    <property type="term" value="P:selenocysteine biosynthetic process"/>
    <property type="evidence" value="ECO:0007669"/>
    <property type="project" value="UniProtKB-UniRule"/>
</dbReference>
<dbReference type="GO" id="GO:0006434">
    <property type="term" value="P:seryl-tRNA aminoacylation"/>
    <property type="evidence" value="ECO:0007669"/>
    <property type="project" value="UniProtKB-UniRule"/>
</dbReference>
<dbReference type="CDD" id="cd00770">
    <property type="entry name" value="SerRS_core"/>
    <property type="match status" value="1"/>
</dbReference>
<dbReference type="Gene3D" id="3.30.930.10">
    <property type="entry name" value="Bira Bifunctional Protein, Domain 2"/>
    <property type="match status" value="1"/>
</dbReference>
<dbReference type="Gene3D" id="1.10.287.40">
    <property type="entry name" value="Serine-tRNA synthetase, tRNA binding domain"/>
    <property type="match status" value="1"/>
</dbReference>
<dbReference type="HAMAP" id="MF_00176">
    <property type="entry name" value="Ser_tRNA_synth_type1"/>
    <property type="match status" value="1"/>
</dbReference>
<dbReference type="InterPro" id="IPR002314">
    <property type="entry name" value="aa-tRNA-synt_IIb"/>
</dbReference>
<dbReference type="InterPro" id="IPR006195">
    <property type="entry name" value="aa-tRNA-synth_II"/>
</dbReference>
<dbReference type="InterPro" id="IPR045864">
    <property type="entry name" value="aa-tRNA-synth_II/BPL/LPL"/>
</dbReference>
<dbReference type="InterPro" id="IPR002317">
    <property type="entry name" value="Ser-tRNA-ligase_type_1"/>
</dbReference>
<dbReference type="InterPro" id="IPR015866">
    <property type="entry name" value="Ser-tRNA-synth_1_N"/>
</dbReference>
<dbReference type="InterPro" id="IPR042103">
    <property type="entry name" value="SerRS_1_N_sf"/>
</dbReference>
<dbReference type="InterPro" id="IPR033729">
    <property type="entry name" value="SerRS_core"/>
</dbReference>
<dbReference type="InterPro" id="IPR010978">
    <property type="entry name" value="tRNA-bd_arm"/>
</dbReference>
<dbReference type="NCBIfam" id="TIGR00414">
    <property type="entry name" value="serS"/>
    <property type="match status" value="1"/>
</dbReference>
<dbReference type="PANTHER" id="PTHR43697:SF1">
    <property type="entry name" value="SERINE--TRNA LIGASE"/>
    <property type="match status" value="1"/>
</dbReference>
<dbReference type="PANTHER" id="PTHR43697">
    <property type="entry name" value="SERYL-TRNA SYNTHETASE"/>
    <property type="match status" value="1"/>
</dbReference>
<dbReference type="Pfam" id="PF02403">
    <property type="entry name" value="Seryl_tRNA_N"/>
    <property type="match status" value="1"/>
</dbReference>
<dbReference type="Pfam" id="PF00587">
    <property type="entry name" value="tRNA-synt_2b"/>
    <property type="match status" value="1"/>
</dbReference>
<dbReference type="PIRSF" id="PIRSF001529">
    <property type="entry name" value="Ser-tRNA-synth_IIa"/>
    <property type="match status" value="1"/>
</dbReference>
<dbReference type="PRINTS" id="PR00981">
    <property type="entry name" value="TRNASYNTHSER"/>
</dbReference>
<dbReference type="SUPFAM" id="SSF55681">
    <property type="entry name" value="Class II aaRS and biotin synthetases"/>
    <property type="match status" value="1"/>
</dbReference>
<dbReference type="SUPFAM" id="SSF46589">
    <property type="entry name" value="tRNA-binding arm"/>
    <property type="match status" value="1"/>
</dbReference>
<dbReference type="PROSITE" id="PS50862">
    <property type="entry name" value="AA_TRNA_LIGASE_II"/>
    <property type="match status" value="1"/>
</dbReference>
<gene>
    <name evidence="1" type="primary">serS</name>
    <name type="ordered locus">CJA_2552</name>
</gene>
<accession>B3PL38</accession>
<name>SYS_CELJU</name>
<sequence>MLDSKLLRTATEQVAKGLAKRGYELDVAKIQALEETRKAIQIKTENLQSERNTRSKAIGKAKQAGEDVAPLMQAVESIKQQLVDAEADLARVQTEWDEFVKAIPNIPADEVPEGKSDEDNVEIRRWGMPRSFHFPIKDHVDLGADLGGLDFDTATKITGSRFAVLRGGIARLHRALAQFMLDTHINQHGYEEVNIPFIVNRDSLFGTGQLPKFEEDLFKLTDDREFYLIPTAEVPLTNIYRDAILEDNQLPIKFVAHSPCFRSEAGSYGRDTRGMIRQHQFEKVELVWLVQPEKSDEALEALVAHAEKILHDLELPHRTVVLCGGDIGFSAAKTYDIEVWVPSQNKYREISSCSNVRDFQARRMLARFRNKETGKPELLHTLNGSGLAVGRTLLAVLENYQQEDGSVIIPEVLRPYMGGQEVLAPVKQ</sequence>
<proteinExistence type="inferred from homology"/>
<comment type="function">
    <text evidence="1">Catalyzes the attachment of serine to tRNA(Ser). Is also able to aminoacylate tRNA(Sec) with serine, to form the misacylated tRNA L-seryl-tRNA(Sec), which will be further converted into selenocysteinyl-tRNA(Sec).</text>
</comment>
<comment type="catalytic activity">
    <reaction evidence="1">
        <text>tRNA(Ser) + L-serine + ATP = L-seryl-tRNA(Ser) + AMP + diphosphate + H(+)</text>
        <dbReference type="Rhea" id="RHEA:12292"/>
        <dbReference type="Rhea" id="RHEA-COMP:9669"/>
        <dbReference type="Rhea" id="RHEA-COMP:9703"/>
        <dbReference type="ChEBI" id="CHEBI:15378"/>
        <dbReference type="ChEBI" id="CHEBI:30616"/>
        <dbReference type="ChEBI" id="CHEBI:33019"/>
        <dbReference type="ChEBI" id="CHEBI:33384"/>
        <dbReference type="ChEBI" id="CHEBI:78442"/>
        <dbReference type="ChEBI" id="CHEBI:78533"/>
        <dbReference type="ChEBI" id="CHEBI:456215"/>
        <dbReference type="EC" id="6.1.1.11"/>
    </reaction>
</comment>
<comment type="catalytic activity">
    <reaction evidence="1">
        <text>tRNA(Sec) + L-serine + ATP = L-seryl-tRNA(Sec) + AMP + diphosphate + H(+)</text>
        <dbReference type="Rhea" id="RHEA:42580"/>
        <dbReference type="Rhea" id="RHEA-COMP:9742"/>
        <dbReference type="Rhea" id="RHEA-COMP:10128"/>
        <dbReference type="ChEBI" id="CHEBI:15378"/>
        <dbReference type="ChEBI" id="CHEBI:30616"/>
        <dbReference type="ChEBI" id="CHEBI:33019"/>
        <dbReference type="ChEBI" id="CHEBI:33384"/>
        <dbReference type="ChEBI" id="CHEBI:78442"/>
        <dbReference type="ChEBI" id="CHEBI:78533"/>
        <dbReference type="ChEBI" id="CHEBI:456215"/>
        <dbReference type="EC" id="6.1.1.11"/>
    </reaction>
</comment>
<comment type="pathway">
    <text evidence="1">Aminoacyl-tRNA biosynthesis; selenocysteinyl-tRNA(Sec) biosynthesis; L-seryl-tRNA(Sec) from L-serine and tRNA(Sec): step 1/1.</text>
</comment>
<comment type="subunit">
    <text evidence="1">Homodimer. The tRNA molecule binds across the dimer.</text>
</comment>
<comment type="subcellular location">
    <subcellularLocation>
        <location evidence="1">Cytoplasm</location>
    </subcellularLocation>
</comment>
<comment type="domain">
    <text evidence="1">Consists of two distinct domains, a catalytic core and a N-terminal extension that is involved in tRNA binding.</text>
</comment>
<comment type="similarity">
    <text evidence="1">Belongs to the class-II aminoacyl-tRNA synthetase family. Type-1 seryl-tRNA synthetase subfamily.</text>
</comment>